<gene>
    <name evidence="1" type="primary">atpA</name>
    <name type="ordered locus">A1E_05115</name>
</gene>
<accession>A8F006</accession>
<sequence>MKLKPIEVAEILQKEIANINCLSELEEVGQVITVGDGIAKIYGLANVKSGEVVEFKSGVKGLVLNLENDSVSAVIMGDDNQVQQGDNVKRIKEVLAVPVGKALLGRVVDVFGNPIDGKGDIASKEYRNIEVKAPGIIERASVSEPVQTGIKAIDSLIPIGRGQRELIIGDRQTGKTAIAVDTIINQKQAHLLTNEHDKIYCIYVAIGQKRSSVAQIVRKLEAAGAMGYTIVIAATASEAAALQFIAPYSACSMGEYFRDNGMHALIIYDDLSKHAVAYRQISLLLRRPPGREAYPGDIFFLHSRLLERAAKMSDAKGSGSLTALPIIETQAGDVSAYIPTNVISITDGQIFLESELFYKGIRPAVNVGISVSRVGSAAQIKAMKQVAGSVKLELAQFRELESFSQFESDLDPTTKAQIDHGKRLVEILKQAQYHPFPVEEQIVSIYVGTKKYLHDVPLQKVKEFEDKMLTEIRLNKNDILESIKNEKRITEETEQKLKTFLENFVKAFIKAS</sequence>
<proteinExistence type="inferred from homology"/>
<evidence type="ECO:0000255" key="1">
    <source>
        <dbReference type="HAMAP-Rule" id="MF_01346"/>
    </source>
</evidence>
<keyword id="KW-0066">ATP synthesis</keyword>
<keyword id="KW-0067">ATP-binding</keyword>
<keyword id="KW-0997">Cell inner membrane</keyword>
<keyword id="KW-1003">Cell membrane</keyword>
<keyword id="KW-0139">CF(1)</keyword>
<keyword id="KW-0375">Hydrogen ion transport</keyword>
<keyword id="KW-0406">Ion transport</keyword>
<keyword id="KW-0472">Membrane</keyword>
<keyword id="KW-0547">Nucleotide-binding</keyword>
<keyword id="KW-1278">Translocase</keyword>
<keyword id="KW-0813">Transport</keyword>
<comment type="function">
    <text evidence="1">Produces ATP from ADP in the presence of a proton gradient across the membrane. The alpha chain is a regulatory subunit.</text>
</comment>
<comment type="catalytic activity">
    <reaction evidence="1">
        <text>ATP + H2O + 4 H(+)(in) = ADP + phosphate + 5 H(+)(out)</text>
        <dbReference type="Rhea" id="RHEA:57720"/>
        <dbReference type="ChEBI" id="CHEBI:15377"/>
        <dbReference type="ChEBI" id="CHEBI:15378"/>
        <dbReference type="ChEBI" id="CHEBI:30616"/>
        <dbReference type="ChEBI" id="CHEBI:43474"/>
        <dbReference type="ChEBI" id="CHEBI:456216"/>
        <dbReference type="EC" id="7.1.2.2"/>
    </reaction>
</comment>
<comment type="subunit">
    <text evidence="1">F-type ATPases have 2 components, CF(1) - the catalytic core - and CF(0) - the membrane proton channel. CF(1) has five subunits: alpha(3), beta(3), gamma(1), delta(1), epsilon(1). CF(0) has three main subunits: a(1), b(2) and c(9-12). The alpha and beta chains form an alternating ring which encloses part of the gamma chain. CF(1) is attached to CF(0) by a central stalk formed by the gamma and epsilon chains, while a peripheral stalk is formed by the delta and b chains.</text>
</comment>
<comment type="subcellular location">
    <subcellularLocation>
        <location evidence="1">Cell inner membrane</location>
        <topology evidence="1">Peripheral membrane protein</topology>
    </subcellularLocation>
</comment>
<comment type="similarity">
    <text evidence="1">Belongs to the ATPase alpha/beta chains family.</text>
</comment>
<name>ATPA_RICCK</name>
<organism>
    <name type="scientific">Rickettsia canadensis (strain McKiel)</name>
    <dbReference type="NCBI Taxonomy" id="293613"/>
    <lineage>
        <taxon>Bacteria</taxon>
        <taxon>Pseudomonadati</taxon>
        <taxon>Pseudomonadota</taxon>
        <taxon>Alphaproteobacteria</taxon>
        <taxon>Rickettsiales</taxon>
        <taxon>Rickettsiaceae</taxon>
        <taxon>Rickettsieae</taxon>
        <taxon>Rickettsia</taxon>
        <taxon>belli group</taxon>
    </lineage>
</organism>
<dbReference type="EC" id="7.1.2.2" evidence="1"/>
<dbReference type="EMBL" id="CP000409">
    <property type="protein sequence ID" value="ABV73939.1"/>
    <property type="molecule type" value="Genomic_DNA"/>
</dbReference>
<dbReference type="RefSeq" id="WP_012149134.1">
    <property type="nucleotide sequence ID" value="NC_009879.1"/>
</dbReference>
<dbReference type="SMR" id="A8F006"/>
<dbReference type="STRING" id="293613.A1E_05115"/>
<dbReference type="KEGG" id="rcm:A1E_05115"/>
<dbReference type="eggNOG" id="COG0056">
    <property type="taxonomic scope" value="Bacteria"/>
</dbReference>
<dbReference type="HOGENOM" id="CLU_010091_2_1_5"/>
<dbReference type="Proteomes" id="UP000007056">
    <property type="component" value="Chromosome"/>
</dbReference>
<dbReference type="GO" id="GO:0005886">
    <property type="term" value="C:plasma membrane"/>
    <property type="evidence" value="ECO:0007669"/>
    <property type="project" value="UniProtKB-SubCell"/>
</dbReference>
<dbReference type="GO" id="GO:0045259">
    <property type="term" value="C:proton-transporting ATP synthase complex"/>
    <property type="evidence" value="ECO:0007669"/>
    <property type="project" value="UniProtKB-KW"/>
</dbReference>
<dbReference type="GO" id="GO:0043531">
    <property type="term" value="F:ADP binding"/>
    <property type="evidence" value="ECO:0007669"/>
    <property type="project" value="TreeGrafter"/>
</dbReference>
<dbReference type="GO" id="GO:0005524">
    <property type="term" value="F:ATP binding"/>
    <property type="evidence" value="ECO:0007669"/>
    <property type="project" value="UniProtKB-UniRule"/>
</dbReference>
<dbReference type="GO" id="GO:0046933">
    <property type="term" value="F:proton-transporting ATP synthase activity, rotational mechanism"/>
    <property type="evidence" value="ECO:0007669"/>
    <property type="project" value="UniProtKB-UniRule"/>
</dbReference>
<dbReference type="CDD" id="cd18113">
    <property type="entry name" value="ATP-synt_F1_alpha_C"/>
    <property type="match status" value="1"/>
</dbReference>
<dbReference type="CDD" id="cd18116">
    <property type="entry name" value="ATP-synt_F1_alpha_N"/>
    <property type="match status" value="1"/>
</dbReference>
<dbReference type="CDD" id="cd01132">
    <property type="entry name" value="F1-ATPase_alpha_CD"/>
    <property type="match status" value="1"/>
</dbReference>
<dbReference type="FunFam" id="1.20.150.20:FF:000001">
    <property type="entry name" value="ATP synthase subunit alpha"/>
    <property type="match status" value="1"/>
</dbReference>
<dbReference type="FunFam" id="2.40.30.20:FF:000001">
    <property type="entry name" value="ATP synthase subunit alpha"/>
    <property type="match status" value="1"/>
</dbReference>
<dbReference type="FunFam" id="3.40.50.300:FF:002432">
    <property type="entry name" value="ATP synthase subunit alpha, mitochondrial"/>
    <property type="match status" value="1"/>
</dbReference>
<dbReference type="Gene3D" id="2.40.30.20">
    <property type="match status" value="1"/>
</dbReference>
<dbReference type="Gene3D" id="1.20.150.20">
    <property type="entry name" value="ATP synthase alpha/beta chain, C-terminal domain"/>
    <property type="match status" value="1"/>
</dbReference>
<dbReference type="Gene3D" id="3.40.50.300">
    <property type="entry name" value="P-loop containing nucleotide triphosphate hydrolases"/>
    <property type="match status" value="1"/>
</dbReference>
<dbReference type="HAMAP" id="MF_01346">
    <property type="entry name" value="ATP_synth_alpha_bact"/>
    <property type="match status" value="1"/>
</dbReference>
<dbReference type="InterPro" id="IPR023366">
    <property type="entry name" value="ATP_synth_asu-like_sf"/>
</dbReference>
<dbReference type="InterPro" id="IPR000793">
    <property type="entry name" value="ATP_synth_asu_C"/>
</dbReference>
<dbReference type="InterPro" id="IPR038376">
    <property type="entry name" value="ATP_synth_asu_C_sf"/>
</dbReference>
<dbReference type="InterPro" id="IPR033732">
    <property type="entry name" value="ATP_synth_F1_a_nt-bd_dom"/>
</dbReference>
<dbReference type="InterPro" id="IPR005294">
    <property type="entry name" value="ATP_synth_F1_asu"/>
</dbReference>
<dbReference type="InterPro" id="IPR020003">
    <property type="entry name" value="ATPase_a/bsu_AS"/>
</dbReference>
<dbReference type="InterPro" id="IPR004100">
    <property type="entry name" value="ATPase_F1/V1/A1_a/bsu_N"/>
</dbReference>
<dbReference type="InterPro" id="IPR036121">
    <property type="entry name" value="ATPase_F1/V1/A1_a/bsu_N_sf"/>
</dbReference>
<dbReference type="InterPro" id="IPR000194">
    <property type="entry name" value="ATPase_F1/V1/A1_a/bsu_nucl-bd"/>
</dbReference>
<dbReference type="InterPro" id="IPR027417">
    <property type="entry name" value="P-loop_NTPase"/>
</dbReference>
<dbReference type="NCBIfam" id="TIGR00962">
    <property type="entry name" value="atpA"/>
    <property type="match status" value="1"/>
</dbReference>
<dbReference type="NCBIfam" id="NF009884">
    <property type="entry name" value="PRK13343.1"/>
    <property type="match status" value="1"/>
</dbReference>
<dbReference type="PANTHER" id="PTHR48082">
    <property type="entry name" value="ATP SYNTHASE SUBUNIT ALPHA, MITOCHONDRIAL"/>
    <property type="match status" value="1"/>
</dbReference>
<dbReference type="PANTHER" id="PTHR48082:SF2">
    <property type="entry name" value="ATP SYNTHASE SUBUNIT ALPHA, MITOCHONDRIAL"/>
    <property type="match status" value="1"/>
</dbReference>
<dbReference type="Pfam" id="PF00006">
    <property type="entry name" value="ATP-synt_ab"/>
    <property type="match status" value="1"/>
</dbReference>
<dbReference type="Pfam" id="PF00306">
    <property type="entry name" value="ATP-synt_ab_C"/>
    <property type="match status" value="1"/>
</dbReference>
<dbReference type="Pfam" id="PF02874">
    <property type="entry name" value="ATP-synt_ab_N"/>
    <property type="match status" value="1"/>
</dbReference>
<dbReference type="PIRSF" id="PIRSF039088">
    <property type="entry name" value="F_ATPase_subunit_alpha"/>
    <property type="match status" value="1"/>
</dbReference>
<dbReference type="SUPFAM" id="SSF47917">
    <property type="entry name" value="C-terminal domain of alpha and beta subunits of F1 ATP synthase"/>
    <property type="match status" value="1"/>
</dbReference>
<dbReference type="SUPFAM" id="SSF50615">
    <property type="entry name" value="N-terminal domain of alpha and beta subunits of F1 ATP synthase"/>
    <property type="match status" value="1"/>
</dbReference>
<dbReference type="SUPFAM" id="SSF52540">
    <property type="entry name" value="P-loop containing nucleoside triphosphate hydrolases"/>
    <property type="match status" value="1"/>
</dbReference>
<dbReference type="PROSITE" id="PS00152">
    <property type="entry name" value="ATPASE_ALPHA_BETA"/>
    <property type="match status" value="1"/>
</dbReference>
<reference key="1">
    <citation type="submission" date="2007-09" db="EMBL/GenBank/DDBJ databases">
        <title>Complete genome sequence of Rickettsia canadensis.</title>
        <authorList>
            <person name="Madan A."/>
            <person name="Fahey J."/>
            <person name="Helton E."/>
            <person name="Ketteman M."/>
            <person name="Madan A."/>
            <person name="Rodrigues S."/>
            <person name="Sanchez A."/>
            <person name="Whiting M."/>
            <person name="Dasch G."/>
            <person name="Eremeeva M."/>
        </authorList>
    </citation>
    <scope>NUCLEOTIDE SEQUENCE [LARGE SCALE GENOMIC DNA]</scope>
    <source>
        <strain>McKiel</strain>
    </source>
</reference>
<protein>
    <recommendedName>
        <fullName evidence="1">ATP synthase subunit alpha</fullName>
        <ecNumber evidence="1">7.1.2.2</ecNumber>
    </recommendedName>
    <alternativeName>
        <fullName evidence="1">ATP synthase F1 sector subunit alpha</fullName>
    </alternativeName>
    <alternativeName>
        <fullName evidence="1">F-ATPase subunit alpha</fullName>
    </alternativeName>
</protein>
<feature type="chain" id="PRO_1000055078" description="ATP synthase subunit alpha">
    <location>
        <begin position="1"/>
        <end position="512"/>
    </location>
</feature>
<feature type="binding site" evidence="1">
    <location>
        <begin position="169"/>
        <end position="176"/>
    </location>
    <ligand>
        <name>ATP</name>
        <dbReference type="ChEBI" id="CHEBI:30616"/>
    </ligand>
</feature>
<feature type="site" description="Required for activity" evidence="1">
    <location>
        <position position="370"/>
    </location>
</feature>